<name>ATX10_MOUSE</name>
<reference key="1">
    <citation type="journal article" date="1990" name="Eur. J. Neurosci.">
        <title>A collection of cDNA clones with specific expression patterns in mouse brain.</title>
        <authorList>
            <person name="Kato K."/>
        </authorList>
    </citation>
    <scope>NUCLEOTIDE SEQUENCE [LARGE SCALE MRNA]</scope>
    <source>
        <strain>BALB/cJ</strain>
        <tissue>Brain</tissue>
    </source>
</reference>
<reference key="2">
    <citation type="journal article" date="2005" name="Science">
        <title>The transcriptional landscape of the mammalian genome.</title>
        <authorList>
            <person name="Carninci P."/>
            <person name="Kasukawa T."/>
            <person name="Katayama S."/>
            <person name="Gough J."/>
            <person name="Frith M.C."/>
            <person name="Maeda N."/>
            <person name="Oyama R."/>
            <person name="Ravasi T."/>
            <person name="Lenhard B."/>
            <person name="Wells C."/>
            <person name="Kodzius R."/>
            <person name="Shimokawa K."/>
            <person name="Bajic V.B."/>
            <person name="Brenner S.E."/>
            <person name="Batalov S."/>
            <person name="Forrest A.R."/>
            <person name="Zavolan M."/>
            <person name="Davis M.J."/>
            <person name="Wilming L.G."/>
            <person name="Aidinis V."/>
            <person name="Allen J.E."/>
            <person name="Ambesi-Impiombato A."/>
            <person name="Apweiler R."/>
            <person name="Aturaliya R.N."/>
            <person name="Bailey T.L."/>
            <person name="Bansal M."/>
            <person name="Baxter L."/>
            <person name="Beisel K.W."/>
            <person name="Bersano T."/>
            <person name="Bono H."/>
            <person name="Chalk A.M."/>
            <person name="Chiu K.P."/>
            <person name="Choudhary V."/>
            <person name="Christoffels A."/>
            <person name="Clutterbuck D.R."/>
            <person name="Crowe M.L."/>
            <person name="Dalla E."/>
            <person name="Dalrymple B.P."/>
            <person name="de Bono B."/>
            <person name="Della Gatta G."/>
            <person name="di Bernardo D."/>
            <person name="Down T."/>
            <person name="Engstrom P."/>
            <person name="Fagiolini M."/>
            <person name="Faulkner G."/>
            <person name="Fletcher C.F."/>
            <person name="Fukushima T."/>
            <person name="Furuno M."/>
            <person name="Futaki S."/>
            <person name="Gariboldi M."/>
            <person name="Georgii-Hemming P."/>
            <person name="Gingeras T.R."/>
            <person name="Gojobori T."/>
            <person name="Green R.E."/>
            <person name="Gustincich S."/>
            <person name="Harbers M."/>
            <person name="Hayashi Y."/>
            <person name="Hensch T.K."/>
            <person name="Hirokawa N."/>
            <person name="Hill D."/>
            <person name="Huminiecki L."/>
            <person name="Iacono M."/>
            <person name="Ikeo K."/>
            <person name="Iwama A."/>
            <person name="Ishikawa T."/>
            <person name="Jakt M."/>
            <person name="Kanapin A."/>
            <person name="Katoh M."/>
            <person name="Kawasawa Y."/>
            <person name="Kelso J."/>
            <person name="Kitamura H."/>
            <person name="Kitano H."/>
            <person name="Kollias G."/>
            <person name="Krishnan S.P."/>
            <person name="Kruger A."/>
            <person name="Kummerfeld S.K."/>
            <person name="Kurochkin I.V."/>
            <person name="Lareau L.F."/>
            <person name="Lazarevic D."/>
            <person name="Lipovich L."/>
            <person name="Liu J."/>
            <person name="Liuni S."/>
            <person name="McWilliam S."/>
            <person name="Madan Babu M."/>
            <person name="Madera M."/>
            <person name="Marchionni L."/>
            <person name="Matsuda H."/>
            <person name="Matsuzawa S."/>
            <person name="Miki H."/>
            <person name="Mignone F."/>
            <person name="Miyake S."/>
            <person name="Morris K."/>
            <person name="Mottagui-Tabar S."/>
            <person name="Mulder N."/>
            <person name="Nakano N."/>
            <person name="Nakauchi H."/>
            <person name="Ng P."/>
            <person name="Nilsson R."/>
            <person name="Nishiguchi S."/>
            <person name="Nishikawa S."/>
            <person name="Nori F."/>
            <person name="Ohara O."/>
            <person name="Okazaki Y."/>
            <person name="Orlando V."/>
            <person name="Pang K.C."/>
            <person name="Pavan W.J."/>
            <person name="Pavesi G."/>
            <person name="Pesole G."/>
            <person name="Petrovsky N."/>
            <person name="Piazza S."/>
            <person name="Reed J."/>
            <person name="Reid J.F."/>
            <person name="Ring B.Z."/>
            <person name="Ringwald M."/>
            <person name="Rost B."/>
            <person name="Ruan Y."/>
            <person name="Salzberg S.L."/>
            <person name="Sandelin A."/>
            <person name="Schneider C."/>
            <person name="Schoenbach C."/>
            <person name="Sekiguchi K."/>
            <person name="Semple C.A."/>
            <person name="Seno S."/>
            <person name="Sessa L."/>
            <person name="Sheng Y."/>
            <person name="Shibata Y."/>
            <person name="Shimada H."/>
            <person name="Shimada K."/>
            <person name="Silva D."/>
            <person name="Sinclair B."/>
            <person name="Sperling S."/>
            <person name="Stupka E."/>
            <person name="Sugiura K."/>
            <person name="Sultana R."/>
            <person name="Takenaka Y."/>
            <person name="Taki K."/>
            <person name="Tammoja K."/>
            <person name="Tan S.L."/>
            <person name="Tang S."/>
            <person name="Taylor M.S."/>
            <person name="Tegner J."/>
            <person name="Teichmann S.A."/>
            <person name="Ueda H.R."/>
            <person name="van Nimwegen E."/>
            <person name="Verardo R."/>
            <person name="Wei C.L."/>
            <person name="Yagi K."/>
            <person name="Yamanishi H."/>
            <person name="Zabarovsky E."/>
            <person name="Zhu S."/>
            <person name="Zimmer A."/>
            <person name="Hide W."/>
            <person name="Bult C."/>
            <person name="Grimmond S.M."/>
            <person name="Teasdale R.D."/>
            <person name="Liu E.T."/>
            <person name="Brusic V."/>
            <person name="Quackenbush J."/>
            <person name="Wahlestedt C."/>
            <person name="Mattick J.S."/>
            <person name="Hume D.A."/>
            <person name="Kai C."/>
            <person name="Sasaki D."/>
            <person name="Tomaru Y."/>
            <person name="Fukuda S."/>
            <person name="Kanamori-Katayama M."/>
            <person name="Suzuki M."/>
            <person name="Aoki J."/>
            <person name="Arakawa T."/>
            <person name="Iida J."/>
            <person name="Imamura K."/>
            <person name="Itoh M."/>
            <person name="Kato T."/>
            <person name="Kawaji H."/>
            <person name="Kawagashira N."/>
            <person name="Kawashima T."/>
            <person name="Kojima M."/>
            <person name="Kondo S."/>
            <person name="Konno H."/>
            <person name="Nakano K."/>
            <person name="Ninomiya N."/>
            <person name="Nishio T."/>
            <person name="Okada M."/>
            <person name="Plessy C."/>
            <person name="Shibata K."/>
            <person name="Shiraki T."/>
            <person name="Suzuki S."/>
            <person name="Tagami M."/>
            <person name="Waki K."/>
            <person name="Watahiki A."/>
            <person name="Okamura-Oho Y."/>
            <person name="Suzuki H."/>
            <person name="Kawai J."/>
            <person name="Hayashizaki Y."/>
        </authorList>
    </citation>
    <scope>NUCLEOTIDE SEQUENCE [LARGE SCALE MRNA]</scope>
    <source>
        <strain>C57BL/6J</strain>
        <strain>NOD</strain>
        <tissue>Bone marrow</tissue>
        <tissue>Cerebellum</tissue>
        <tissue>Embryo</tissue>
        <tissue>Lung</tissue>
    </source>
</reference>
<reference key="3">
    <citation type="journal article" date="2004" name="Genome Res.">
        <title>The status, quality, and expansion of the NIH full-length cDNA project: the Mammalian Gene Collection (MGC).</title>
        <authorList>
            <consortium name="The MGC Project Team"/>
        </authorList>
    </citation>
    <scope>NUCLEOTIDE SEQUENCE [LARGE SCALE MRNA]</scope>
    <source>
        <strain>C57BL/6J</strain>
        <tissue>Brain</tissue>
        <tissue>Mammary gland</tissue>
    </source>
</reference>
<reference key="4">
    <citation type="submission" date="2007-04" db="UniProtKB">
        <authorList>
            <person name="Lubec G."/>
            <person name="Kang S.U."/>
        </authorList>
    </citation>
    <scope>PROTEIN SEQUENCE OF 244-253</scope>
    <scope>IDENTIFICATION BY MASS SPECTROMETRY</scope>
    <source>
        <strain>C57BL/6J</strain>
        <tissue>Brain</tissue>
    </source>
</reference>
<reference key="5">
    <citation type="journal article" date="2004" name="J. Biol. Chem.">
        <title>Ataxin-10, the spinocerebellar ataxia type 10 neurodegenerative disorder protein, is essential for survival of cerebellar neurons.</title>
        <authorList>
            <person name="Maerz P."/>
            <person name="Probst A."/>
            <person name="Lang S."/>
            <person name="Schwager M."/>
            <person name="Rose-John S."/>
            <person name="Otten U."/>
            <person name="Ozbek S."/>
        </authorList>
    </citation>
    <scope>TISSUE SPECIFICITY</scope>
</reference>
<reference key="6">
    <citation type="journal article" date="2005" name="Biochem. Biophys. Res. Commun.">
        <title>Ataxin-10 interacts with O-GlcNAc transferase OGT in pancreatic beta cells.</title>
        <authorList>
            <person name="Andrali S.S."/>
            <person name="Maerz P."/>
            <person name="Ozcan S."/>
        </authorList>
    </citation>
    <scope>INTERACTION WITH OGT</scope>
</reference>
<reference key="7">
    <citation type="journal article" date="2010" name="Cell">
        <title>A tissue-specific atlas of mouse protein phosphorylation and expression.</title>
        <authorList>
            <person name="Huttlin E.L."/>
            <person name="Jedrychowski M.P."/>
            <person name="Elias J.E."/>
            <person name="Goswami T."/>
            <person name="Rad R."/>
            <person name="Beausoleil S.A."/>
            <person name="Villen J."/>
            <person name="Haas W."/>
            <person name="Sowa M.E."/>
            <person name="Gygi S.P."/>
        </authorList>
    </citation>
    <scope>IDENTIFICATION BY MASS SPECTROMETRY [LARGE SCALE ANALYSIS]</scope>
    <source>
        <tissue>Brain</tissue>
        <tissue>Brown adipose tissue</tissue>
        <tissue>Heart</tissue>
        <tissue>Kidney</tissue>
        <tissue>Liver</tissue>
        <tissue>Lung</tissue>
        <tissue>Pancreas</tissue>
        <tissue>Spleen</tissue>
        <tissue>Testis</tissue>
    </source>
</reference>
<reference key="8">
    <citation type="journal article" date="2014" name="Mol. Cell. Proteomics">
        <title>Immunoaffinity enrichment and mass spectrometry analysis of protein methylation.</title>
        <authorList>
            <person name="Guo A."/>
            <person name="Gu H."/>
            <person name="Zhou J."/>
            <person name="Mulhern D."/>
            <person name="Wang Y."/>
            <person name="Lee K.A."/>
            <person name="Yang V."/>
            <person name="Aguiar M."/>
            <person name="Kornhauser J."/>
            <person name="Jia X."/>
            <person name="Ren J."/>
            <person name="Beausoleil S.A."/>
            <person name="Silva J.C."/>
            <person name="Vemulapalli V."/>
            <person name="Bedford M.T."/>
            <person name="Comb M.J."/>
        </authorList>
    </citation>
    <scope>METHYLATION [LARGE SCALE ANALYSIS] AT ARG-10</scope>
    <scope>IDENTIFICATION BY MASS SPECTROMETRY [LARGE SCALE ANALYSIS]</scope>
    <source>
        <tissue>Embryo</tissue>
    </source>
</reference>
<reference key="9">
    <citation type="journal article" date="2021" name="Front. Cell Dev. Biol.">
        <title>ATXN10 Is Required for Embryonic Heart Development and Maintenance of Epithelial Cell Phenotypes in the Adult Kidney and Pancreas.</title>
        <authorList>
            <person name="Bentley-Ford M.R."/>
            <person name="Andersen R.S."/>
            <person name="Croyle M.J."/>
            <person name="Haycraft C.J."/>
            <person name="Clearman K.R."/>
            <person name="Foote J.B."/>
            <person name="Reiter J.F."/>
            <person name="Yoder B.K."/>
        </authorList>
    </citation>
    <scope>FUNCTION</scope>
    <scope>SUBCELLULAR LOCATION</scope>
    <scope>DISRUPTION PHENOTYPE</scope>
</reference>
<accession>P28658</accession>
<accession>Q543S3</accession>
<accession>Q99LP5</accession>
<accession>Q9D1I1</accession>
<organism>
    <name type="scientific">Mus musculus</name>
    <name type="common">Mouse</name>
    <dbReference type="NCBI Taxonomy" id="10090"/>
    <lineage>
        <taxon>Eukaryota</taxon>
        <taxon>Metazoa</taxon>
        <taxon>Chordata</taxon>
        <taxon>Craniata</taxon>
        <taxon>Vertebrata</taxon>
        <taxon>Euteleostomi</taxon>
        <taxon>Mammalia</taxon>
        <taxon>Eutheria</taxon>
        <taxon>Euarchontoglires</taxon>
        <taxon>Glires</taxon>
        <taxon>Rodentia</taxon>
        <taxon>Myomorpha</taxon>
        <taxon>Muroidea</taxon>
        <taxon>Muridae</taxon>
        <taxon>Murinae</taxon>
        <taxon>Mus</taxon>
        <taxon>Mus</taxon>
    </lineage>
</organism>
<dbReference type="EMBL" id="X61506">
    <property type="protein sequence ID" value="CAA43722.1"/>
    <property type="status" value="ALT_FRAME"/>
    <property type="molecule type" value="mRNA"/>
</dbReference>
<dbReference type="EMBL" id="AK003530">
    <property type="protein sequence ID" value="BAB22840.1"/>
    <property type="molecule type" value="mRNA"/>
</dbReference>
<dbReference type="EMBL" id="AK047170">
    <property type="protein sequence ID" value="BAC32981.1"/>
    <property type="molecule type" value="mRNA"/>
</dbReference>
<dbReference type="EMBL" id="AK078459">
    <property type="protein sequence ID" value="BAC37285.1"/>
    <property type="molecule type" value="mRNA"/>
</dbReference>
<dbReference type="EMBL" id="AK153271">
    <property type="protein sequence ID" value="BAE31858.1"/>
    <property type="molecule type" value="mRNA"/>
</dbReference>
<dbReference type="EMBL" id="AK165941">
    <property type="protein sequence ID" value="BAE38473.1"/>
    <property type="molecule type" value="mRNA"/>
</dbReference>
<dbReference type="EMBL" id="AK170507">
    <property type="protein sequence ID" value="BAE41845.1"/>
    <property type="molecule type" value="mRNA"/>
</dbReference>
<dbReference type="EMBL" id="BC002285">
    <property type="protein sequence ID" value="AAH02285.1"/>
    <property type="molecule type" value="mRNA"/>
</dbReference>
<dbReference type="EMBL" id="BC016410">
    <property type="protein sequence ID" value="AAH16410.1"/>
    <property type="molecule type" value="mRNA"/>
</dbReference>
<dbReference type="EMBL" id="BC046802">
    <property type="protein sequence ID" value="AAH46802.1"/>
    <property type="molecule type" value="mRNA"/>
</dbReference>
<dbReference type="CCDS" id="CCDS37170.1"/>
<dbReference type="PIR" id="S16416">
    <property type="entry name" value="S16416"/>
</dbReference>
<dbReference type="RefSeq" id="NP_058539.2">
    <property type="nucleotide sequence ID" value="NM_016843.4"/>
</dbReference>
<dbReference type="SMR" id="P28658"/>
<dbReference type="BioGRID" id="207574">
    <property type="interactions" value="14"/>
</dbReference>
<dbReference type="FunCoup" id="P28658">
    <property type="interactions" value="2323"/>
</dbReference>
<dbReference type="IntAct" id="P28658">
    <property type="interactions" value="6"/>
</dbReference>
<dbReference type="MINT" id="P28658"/>
<dbReference type="STRING" id="10090.ENSMUSP00000132450"/>
<dbReference type="GlyGen" id="P28658">
    <property type="glycosylation" value="1 site, 1 O-linked glycan (1 site)"/>
</dbReference>
<dbReference type="iPTMnet" id="P28658"/>
<dbReference type="PhosphoSitePlus" id="P28658"/>
<dbReference type="SwissPalm" id="P28658"/>
<dbReference type="jPOST" id="P28658"/>
<dbReference type="PaxDb" id="10090-ENSMUSP00000132450"/>
<dbReference type="PeptideAtlas" id="P28658"/>
<dbReference type="ProteomicsDB" id="273589"/>
<dbReference type="Pumba" id="P28658"/>
<dbReference type="Antibodypedia" id="27938">
    <property type="antibodies" value="196 antibodies from 26 providers"/>
</dbReference>
<dbReference type="DNASU" id="54138"/>
<dbReference type="Ensembl" id="ENSMUST00000163242.3">
    <property type="protein sequence ID" value="ENSMUSP00000132450.2"/>
    <property type="gene ID" value="ENSMUSG00000016541.11"/>
</dbReference>
<dbReference type="GeneID" id="54138"/>
<dbReference type="KEGG" id="mmu:54138"/>
<dbReference type="UCSC" id="uc007xdd.1">
    <property type="organism name" value="mouse"/>
</dbReference>
<dbReference type="AGR" id="MGI:1859293"/>
<dbReference type="CTD" id="25814"/>
<dbReference type="MGI" id="MGI:1859293">
    <property type="gene designation" value="Atxn10"/>
</dbReference>
<dbReference type="VEuPathDB" id="HostDB:ENSMUSG00000016541"/>
<dbReference type="eggNOG" id="KOG2676">
    <property type="taxonomic scope" value="Eukaryota"/>
</dbReference>
<dbReference type="GeneTree" id="ENSGT00390000010377"/>
<dbReference type="HOGENOM" id="CLU_046084_1_0_1"/>
<dbReference type="InParanoid" id="P28658"/>
<dbReference type="OMA" id="CAWESPP"/>
<dbReference type="OrthoDB" id="379794at2759"/>
<dbReference type="PhylomeDB" id="P28658"/>
<dbReference type="TreeFam" id="TF323870"/>
<dbReference type="BioGRID-ORCS" id="54138">
    <property type="hits" value="15 hits in 79 CRISPR screens"/>
</dbReference>
<dbReference type="ChiTaRS" id="Atxn10">
    <property type="organism name" value="mouse"/>
</dbReference>
<dbReference type="PRO" id="PR:P28658"/>
<dbReference type="Proteomes" id="UP000000589">
    <property type="component" value="Chromosome 15"/>
</dbReference>
<dbReference type="RNAct" id="P28658">
    <property type="molecule type" value="protein"/>
</dbReference>
<dbReference type="Bgee" id="ENSMUSG00000016541">
    <property type="expression patterns" value="Expressed in motor neuron and 258 other cell types or tissues"/>
</dbReference>
<dbReference type="GO" id="GO:0005814">
    <property type="term" value="C:centriole"/>
    <property type="evidence" value="ECO:0000314"/>
    <property type="project" value="UniProtKB"/>
</dbReference>
<dbReference type="GO" id="GO:0036064">
    <property type="term" value="C:ciliary basal body"/>
    <property type="evidence" value="ECO:0000314"/>
    <property type="project" value="UniProtKB"/>
</dbReference>
<dbReference type="GO" id="GO:0005737">
    <property type="term" value="C:cytoplasm"/>
    <property type="evidence" value="ECO:0000250"/>
    <property type="project" value="UniProtKB"/>
</dbReference>
<dbReference type="GO" id="GO:0005829">
    <property type="term" value="C:cytosol"/>
    <property type="evidence" value="ECO:0007669"/>
    <property type="project" value="Ensembl"/>
</dbReference>
<dbReference type="GO" id="GO:0030425">
    <property type="term" value="C:dendrite"/>
    <property type="evidence" value="ECO:0007669"/>
    <property type="project" value="Ensembl"/>
</dbReference>
<dbReference type="GO" id="GO:0030496">
    <property type="term" value="C:midbody"/>
    <property type="evidence" value="ECO:0000250"/>
    <property type="project" value="UniProtKB"/>
</dbReference>
<dbReference type="GO" id="GO:0043025">
    <property type="term" value="C:neuronal cell body"/>
    <property type="evidence" value="ECO:0007669"/>
    <property type="project" value="Ensembl"/>
</dbReference>
<dbReference type="GO" id="GO:0048471">
    <property type="term" value="C:perinuclear region of cytoplasm"/>
    <property type="evidence" value="ECO:0000250"/>
    <property type="project" value="UniProtKB"/>
</dbReference>
<dbReference type="GO" id="GO:0005886">
    <property type="term" value="C:plasma membrane"/>
    <property type="evidence" value="ECO:0007669"/>
    <property type="project" value="Ensembl"/>
</dbReference>
<dbReference type="GO" id="GO:0051301">
    <property type="term" value="P:cell division"/>
    <property type="evidence" value="ECO:0007669"/>
    <property type="project" value="UniProtKB-KW"/>
</dbReference>
<dbReference type="GO" id="GO:0060271">
    <property type="term" value="P:cilium assembly"/>
    <property type="evidence" value="ECO:0000315"/>
    <property type="project" value="MGI"/>
</dbReference>
<dbReference type="GO" id="GO:0031175">
    <property type="term" value="P:neuron projection development"/>
    <property type="evidence" value="ECO:0007669"/>
    <property type="project" value="Ensembl"/>
</dbReference>
<dbReference type="GO" id="GO:0032465">
    <property type="term" value="P:regulation of cytokinesis"/>
    <property type="evidence" value="ECO:0000250"/>
    <property type="project" value="UniProtKB"/>
</dbReference>
<dbReference type="FunFam" id="1.25.10.10:FF:000390">
    <property type="entry name" value="Ataxin-10"/>
    <property type="match status" value="1"/>
</dbReference>
<dbReference type="FunFam" id="1.25.10.10:FF:000897">
    <property type="entry name" value="Ataxin-10"/>
    <property type="match status" value="1"/>
</dbReference>
<dbReference type="Gene3D" id="1.25.10.10">
    <property type="entry name" value="Leucine-rich Repeat Variant"/>
    <property type="match status" value="2"/>
</dbReference>
<dbReference type="InterPro" id="IPR011989">
    <property type="entry name" value="ARM-like"/>
</dbReference>
<dbReference type="InterPro" id="IPR016024">
    <property type="entry name" value="ARM-type_fold"/>
</dbReference>
<dbReference type="InterPro" id="IPR051374">
    <property type="entry name" value="Ataxin-10/CTR86_families"/>
</dbReference>
<dbReference type="InterPro" id="IPR019156">
    <property type="entry name" value="Ataxin-10_domain"/>
</dbReference>
<dbReference type="PANTHER" id="PTHR13255">
    <property type="entry name" value="ATAXIN-10"/>
    <property type="match status" value="1"/>
</dbReference>
<dbReference type="PANTHER" id="PTHR13255:SF0">
    <property type="entry name" value="ATAXIN-10"/>
    <property type="match status" value="1"/>
</dbReference>
<dbReference type="Pfam" id="PF09759">
    <property type="entry name" value="Atx10homo_assoc"/>
    <property type="match status" value="1"/>
</dbReference>
<dbReference type="SUPFAM" id="SSF48371">
    <property type="entry name" value="ARM repeat"/>
    <property type="match status" value="1"/>
</dbReference>
<proteinExistence type="evidence at protein level"/>
<keyword id="KW-0131">Cell cycle</keyword>
<keyword id="KW-0132">Cell division</keyword>
<keyword id="KW-0966">Cell projection</keyword>
<keyword id="KW-0963">Cytoplasm</keyword>
<keyword id="KW-0206">Cytoskeleton</keyword>
<keyword id="KW-0903">Direct protein sequencing</keyword>
<keyword id="KW-0488">Methylation</keyword>
<keyword id="KW-0597">Phosphoprotein</keyword>
<keyword id="KW-1185">Reference proteome</keyword>
<keyword id="KW-0832">Ubl conjugation</keyword>
<comment type="function">
    <text evidence="1 4">May play a role in the regulation of cytokinesis (PubMed:34970537). May play a role in signaling by stimulating protein glycosylation. Induces neuritogenesis by activating the Ras-MAP kinase pathway and is necessary for the survival of cerebellar neurons (By similarity). Does not appear to play a major role in ciliogenesis (PubMed:34970537).</text>
</comment>
<comment type="subunit">
    <text evidence="1 2">Homooligomer (By similarity). Interacts with GNB2. Interacts with IQCB1 (By similarity). Interacts with OGT (By similarity). Interacts with PLK1 (By similarity).</text>
</comment>
<comment type="interaction">
    <interactant intactId="EBI-4284019">
        <id>P28658</id>
    </interactant>
    <interactant intactId="EBI-4282243">
        <id>Q8BP00</id>
        <label>Iqcb1</label>
    </interactant>
    <organismsDiffer>false</organismsDiffer>
    <experiments>2</experiments>
</comment>
<comment type="subcellular location">
    <subcellularLocation>
        <location evidence="2">Cytoplasm</location>
        <location evidence="2">Perinuclear region</location>
    </subcellularLocation>
    <subcellularLocation>
        <location evidence="2">Midbody</location>
    </subcellularLocation>
    <subcellularLocation>
        <location evidence="4">Cytoplasm</location>
        <location evidence="4">Cytoskeleton</location>
        <location evidence="4">Cilium basal body</location>
    </subcellularLocation>
    <subcellularLocation>
        <location evidence="4">Cytoplasm</location>
        <location evidence="4">Cytoskeleton</location>
        <location evidence="4">Microtubule organizing center</location>
        <location evidence="4">Centrosome</location>
        <location evidence="4">Centriole</location>
    </subcellularLocation>
    <text evidence="2">Localizes to the midbody during telophase.</text>
</comment>
<comment type="tissue specificity">
    <text evidence="3">In high cell density areas; cerebellar cortex, dentate gyrus, hippocampus, anterior olfactory nucleus, primary olfactory cortex.</text>
</comment>
<comment type="PTM">
    <text evidence="2">Polyubiquitinated.</text>
</comment>
<comment type="PTM">
    <text evidence="2">Phosphorylation at Ser-12 by AURKB promotes the association of ATXN10 with PLK1. Phosphorylation at Ser-77 and Thr-82 by PLK1 may play a role in the regulation of cytokinesis and may stimulate the proteasome-mediated degradation of ATXN10.</text>
</comment>
<comment type="disruption phenotype">
    <text evidence="4">Embryonic lethal; mutant embryos display gross morphological cardiac abnormalities or developmental delay, the walls of the heart are thinned with an apparent reduction in trabeculation (PubMed:34970537). Mutant embryos also display neural tube defects with a thinned appearance which may result from a lack of cell proliferation (PubMed:34970537).</text>
</comment>
<comment type="similarity">
    <text evidence="5">Belongs to the ataxin-10 family.</text>
</comment>
<comment type="sequence caution" evidence="5">
    <conflict type="frameshift">
        <sequence resource="EMBL-CDS" id="CAA43722"/>
    </conflict>
</comment>
<evidence type="ECO:0000250" key="1">
    <source>
        <dbReference type="UniProtKB" id="Q9ER24"/>
    </source>
</evidence>
<evidence type="ECO:0000250" key="2">
    <source>
        <dbReference type="UniProtKB" id="Q9UBB4"/>
    </source>
</evidence>
<evidence type="ECO:0000269" key="3">
    <source>
    </source>
</evidence>
<evidence type="ECO:0000269" key="4">
    <source>
    </source>
</evidence>
<evidence type="ECO:0000305" key="5"/>
<evidence type="ECO:0007744" key="6">
    <source>
    </source>
</evidence>
<gene>
    <name type="primary">Atxn10</name>
    <name type="synonym">Sca10</name>
</gene>
<sequence length="475" mass="53707">MAAPRMPPSRLSGIMVPAPIQDLEALRALTALFKEQRNRETAPRTIFQRVLDILKKSTHAVELACRDPSQVEHLASSLQLITECFRCLRNACIECSVNQNSIRNLDTIGVAVDLVLLFRELRVEQDSLLTAFRCGLQFLGNVASRNEESQSIVWVHAFPELFMSCLNHPDKKIVAYCSMILFTSLNAERMKDLEENLNIAINVIEAHQKHPASEWPFLIISDHFLKSPELVEAMYGKLSNQERITLLDIVIAKLVGEEQLTKDDISIFVRHAELIANSFMDQCRNVLKLTSEPHTEDKEALVTIRLLDVLCEMTSNTELLGYLQVFPGLMERVIDVLRVIHEVGKESTNIFSPSDSLKAEGDIEHMTEGFKSHLIRLIGNLCYKNKENQDKVNELDGIPLILDSSNIDDNNPFMMQWVVYAVRNLTEDNSQNQDVIAKMEEQGLADASLLKKMGFEIEKSGDKLILKSNNDIPPP</sequence>
<protein>
    <recommendedName>
        <fullName>Ataxin-10</fullName>
    </recommendedName>
    <alternativeName>
        <fullName>Brain protein E46</fullName>
    </alternativeName>
    <alternativeName>
        <fullName>Spinocerebellar ataxia type 10 protein homolog</fullName>
    </alternativeName>
</protein>
<feature type="chain" id="PRO_0000064749" description="Ataxin-10">
    <location>
        <begin position="1"/>
        <end position="475"/>
    </location>
</feature>
<feature type="modified residue" description="Omega-N-methylarginine" evidence="6">
    <location>
        <position position="10"/>
    </location>
</feature>
<feature type="modified residue" description="Phosphoserine" evidence="2">
    <location>
        <position position="12"/>
    </location>
</feature>
<feature type="modified residue" description="Phosphoserine" evidence="2">
    <location>
        <position position="77"/>
    </location>
</feature>
<feature type="modified residue" description="Phosphothreonine" evidence="2">
    <location>
        <position position="82"/>
    </location>
</feature>
<feature type="modified residue" description="Phosphoserine" evidence="2">
    <location>
        <position position="430"/>
    </location>
</feature>
<feature type="sequence conflict" description="In Ref. 1; CAA43722." evidence="5" ref="1">
    <original>A</original>
    <variation>V</variation>
    <location>
        <position position="31"/>
    </location>
</feature>